<accession>Q66FF3</accession>
<dbReference type="EC" id="2.7.1.5" evidence="1"/>
<dbReference type="EMBL" id="BX936398">
    <property type="protein sequence ID" value="CAH19625.1"/>
    <property type="molecule type" value="Genomic_DNA"/>
</dbReference>
<dbReference type="RefSeq" id="WP_002209105.1">
    <property type="nucleotide sequence ID" value="NZ_CP009712.1"/>
</dbReference>
<dbReference type="SMR" id="Q66FF3"/>
<dbReference type="GeneID" id="57974275"/>
<dbReference type="KEGG" id="yps:YPTB0385"/>
<dbReference type="UniPathway" id="UPA00541">
    <property type="reaction ID" value="UER00602"/>
</dbReference>
<dbReference type="Proteomes" id="UP000001011">
    <property type="component" value="Chromosome"/>
</dbReference>
<dbReference type="GO" id="GO:0005829">
    <property type="term" value="C:cytosol"/>
    <property type="evidence" value="ECO:0007669"/>
    <property type="project" value="TreeGrafter"/>
</dbReference>
<dbReference type="GO" id="GO:0005524">
    <property type="term" value="F:ATP binding"/>
    <property type="evidence" value="ECO:0007669"/>
    <property type="project" value="UniProtKB-KW"/>
</dbReference>
<dbReference type="GO" id="GO:0004370">
    <property type="term" value="F:glycerol kinase activity"/>
    <property type="evidence" value="ECO:0007669"/>
    <property type="project" value="TreeGrafter"/>
</dbReference>
<dbReference type="GO" id="GO:0008993">
    <property type="term" value="F:rhamnulokinase activity"/>
    <property type="evidence" value="ECO:0007669"/>
    <property type="project" value="UniProtKB-UniRule"/>
</dbReference>
<dbReference type="GO" id="GO:0006071">
    <property type="term" value="P:glycerol metabolic process"/>
    <property type="evidence" value="ECO:0007669"/>
    <property type="project" value="TreeGrafter"/>
</dbReference>
<dbReference type="GO" id="GO:0019301">
    <property type="term" value="P:rhamnose catabolic process"/>
    <property type="evidence" value="ECO:0007669"/>
    <property type="project" value="UniProtKB-UniRule"/>
</dbReference>
<dbReference type="CDD" id="cd07771">
    <property type="entry name" value="ASKHA_NBD_FGGY_RhaB-like"/>
    <property type="match status" value="1"/>
</dbReference>
<dbReference type="FunFam" id="3.30.420.40:FF:000064">
    <property type="entry name" value="Rhamnulokinase"/>
    <property type="match status" value="1"/>
</dbReference>
<dbReference type="FunFam" id="3.30.420.40:FF:000073">
    <property type="entry name" value="Rhamnulokinase"/>
    <property type="match status" value="1"/>
</dbReference>
<dbReference type="Gene3D" id="3.30.420.40">
    <property type="match status" value="2"/>
</dbReference>
<dbReference type="HAMAP" id="MF_01535">
    <property type="entry name" value="Rhamnulokinase"/>
    <property type="match status" value="1"/>
</dbReference>
<dbReference type="InterPro" id="IPR043129">
    <property type="entry name" value="ATPase_NBD"/>
</dbReference>
<dbReference type="InterPro" id="IPR000577">
    <property type="entry name" value="Carb_kinase_FGGY"/>
</dbReference>
<dbReference type="InterPro" id="IPR018485">
    <property type="entry name" value="FGGY_C"/>
</dbReference>
<dbReference type="InterPro" id="IPR018484">
    <property type="entry name" value="FGGY_N"/>
</dbReference>
<dbReference type="InterPro" id="IPR013449">
    <property type="entry name" value="Rhamnulokinase"/>
</dbReference>
<dbReference type="NCBIfam" id="NF007925">
    <property type="entry name" value="PRK10640.1"/>
    <property type="match status" value="1"/>
</dbReference>
<dbReference type="NCBIfam" id="TIGR02627">
    <property type="entry name" value="rhamnulo_kin"/>
    <property type="match status" value="1"/>
</dbReference>
<dbReference type="PANTHER" id="PTHR10196:SF93">
    <property type="entry name" value="L-RHAMNULOKINASE"/>
    <property type="match status" value="1"/>
</dbReference>
<dbReference type="PANTHER" id="PTHR10196">
    <property type="entry name" value="SUGAR KINASE"/>
    <property type="match status" value="1"/>
</dbReference>
<dbReference type="Pfam" id="PF02782">
    <property type="entry name" value="FGGY_C"/>
    <property type="match status" value="1"/>
</dbReference>
<dbReference type="Pfam" id="PF00370">
    <property type="entry name" value="FGGY_N"/>
    <property type="match status" value="1"/>
</dbReference>
<dbReference type="PIRSF" id="PIRSF000538">
    <property type="entry name" value="GlpK"/>
    <property type="match status" value="1"/>
</dbReference>
<dbReference type="SUPFAM" id="SSF53067">
    <property type="entry name" value="Actin-like ATPase domain"/>
    <property type="match status" value="2"/>
</dbReference>
<sequence>MVAIDLGASSGRVMLASYYPGQQQLTLREVCRFTNQIKSIDGSDVWDIDAIEQSIREGLSQLDSEGIALDSIGIDSWGVDFVLLDKQGKRIGQPVSYRDSRTQGVMARAQQTLGSNAIYRRTGIQFLPFNTLYQLRALSEQQPHLLADVAHLLLIPDYLHYRLTGQLNWEYTNASTTQLLNIETGDWDSDLLAYAGVPAHWFAKPGKPGNTIGYWHSANGQQVPVVAVATHDTASAVLAAPLIDADAAYLSSGTWSLMGFESGTPLTHQQAQCSNITNEGGAEGRYRVLKNIMGLWLLQRATDELQIDDLPQLIEQAARQPACRSLINPNDSRFINPPNMCREIQNACREHQFPVPNTAAQLARCIFDSLAMLYRQVAQELATLRGRPISHLHIVGGGCQNQFLNQLCADACGLNVSMGPVEASTLGNIGSQLISLGEVADVTHYRRIVANNFPLHHLSPHDNSDFAAHWLQFQSLSQLPKELCI</sequence>
<reference key="1">
    <citation type="journal article" date="2004" name="Proc. Natl. Acad. Sci. U.S.A.">
        <title>Insights into the evolution of Yersinia pestis through whole-genome comparison with Yersinia pseudotuberculosis.</title>
        <authorList>
            <person name="Chain P.S.G."/>
            <person name="Carniel E."/>
            <person name="Larimer F.W."/>
            <person name="Lamerdin J."/>
            <person name="Stoutland P.O."/>
            <person name="Regala W.M."/>
            <person name="Georgescu A.M."/>
            <person name="Vergez L.M."/>
            <person name="Land M.L."/>
            <person name="Motin V.L."/>
            <person name="Brubaker R.R."/>
            <person name="Fowler J."/>
            <person name="Hinnebusch J."/>
            <person name="Marceau M."/>
            <person name="Medigue C."/>
            <person name="Simonet M."/>
            <person name="Chenal-Francisque V."/>
            <person name="Souza B."/>
            <person name="Dacheux D."/>
            <person name="Elliott J.M."/>
            <person name="Derbise A."/>
            <person name="Hauser L.J."/>
            <person name="Garcia E."/>
        </authorList>
    </citation>
    <scope>NUCLEOTIDE SEQUENCE [LARGE SCALE GENOMIC DNA]</scope>
    <source>
        <strain>IP32953</strain>
    </source>
</reference>
<evidence type="ECO:0000255" key="1">
    <source>
        <dbReference type="HAMAP-Rule" id="MF_01535"/>
    </source>
</evidence>
<protein>
    <recommendedName>
        <fullName evidence="1">Rhamnulokinase</fullName>
        <shortName evidence="1">RhaB</shortName>
        <ecNumber evidence="1">2.7.1.5</ecNumber>
    </recommendedName>
    <alternativeName>
        <fullName evidence="1">ATP:L-rhamnulose phosphotransferase</fullName>
    </alternativeName>
    <alternativeName>
        <fullName evidence="1">L-rhamnulose 1-kinase</fullName>
    </alternativeName>
    <alternativeName>
        <fullName evidence="1">Rhamnulose kinase</fullName>
    </alternativeName>
</protein>
<keyword id="KW-0067">ATP-binding</keyword>
<keyword id="KW-1015">Disulfide bond</keyword>
<keyword id="KW-0418">Kinase</keyword>
<keyword id="KW-0460">Magnesium</keyword>
<keyword id="KW-0547">Nucleotide-binding</keyword>
<keyword id="KW-0684">Rhamnose metabolism</keyword>
<keyword id="KW-0808">Transferase</keyword>
<proteinExistence type="inferred from homology"/>
<feature type="chain" id="PRO_0000090548" description="Rhamnulokinase">
    <location>
        <begin position="1"/>
        <end position="485"/>
    </location>
</feature>
<feature type="active site" description="Proton acceptor" evidence="1">
    <location>
        <position position="232"/>
    </location>
</feature>
<feature type="binding site" evidence="1">
    <location>
        <begin position="8"/>
        <end position="12"/>
    </location>
    <ligand>
        <name>ATP</name>
        <dbReference type="ChEBI" id="CHEBI:30616"/>
    </ligand>
</feature>
<feature type="binding site" evidence="1">
    <location>
        <position position="78"/>
    </location>
    <ligand>
        <name>substrate</name>
    </ligand>
</feature>
<feature type="binding site" evidence="1">
    <location>
        <begin position="231"/>
        <end position="233"/>
    </location>
    <ligand>
        <name>substrate</name>
    </ligand>
</feature>
<feature type="binding site" evidence="1">
    <location>
        <position position="254"/>
    </location>
    <ligand>
        <name>ATP</name>
        <dbReference type="ChEBI" id="CHEBI:30616"/>
    </ligand>
</feature>
<feature type="binding site" evidence="1">
    <location>
        <position position="291"/>
    </location>
    <ligand>
        <name>substrate</name>
    </ligand>
</feature>
<feature type="binding site" evidence="1">
    <location>
        <position position="299"/>
    </location>
    <ligand>
        <name>ATP</name>
        <dbReference type="ChEBI" id="CHEBI:30616"/>
    </ligand>
</feature>
<feature type="binding site" evidence="1">
    <location>
        <position position="397"/>
    </location>
    <ligand>
        <name>ATP</name>
        <dbReference type="ChEBI" id="CHEBI:30616"/>
    </ligand>
</feature>
<feature type="disulfide bond" evidence="1">
    <location>
        <begin position="348"/>
        <end position="365"/>
    </location>
</feature>
<feature type="disulfide bond" evidence="1">
    <location>
        <begin position="408"/>
        <end position="412"/>
    </location>
</feature>
<gene>
    <name evidence="1" type="primary">rhaB</name>
    <name type="ordered locus">YPTB0385</name>
</gene>
<comment type="function">
    <text evidence="1">Involved in the catabolism of L-rhamnose (6-deoxy-L-mannose). Catalyzes the transfer of the gamma-phosphate group from ATP to the 1-hydroxyl group of L-rhamnulose to yield L-rhamnulose 1-phosphate.</text>
</comment>
<comment type="catalytic activity">
    <reaction evidence="1">
        <text>L-rhamnulose + ATP = L-rhamnulose 1-phosphate + ADP + H(+)</text>
        <dbReference type="Rhea" id="RHEA:20117"/>
        <dbReference type="ChEBI" id="CHEBI:15378"/>
        <dbReference type="ChEBI" id="CHEBI:17897"/>
        <dbReference type="ChEBI" id="CHEBI:30616"/>
        <dbReference type="ChEBI" id="CHEBI:58313"/>
        <dbReference type="ChEBI" id="CHEBI:456216"/>
        <dbReference type="EC" id="2.7.1.5"/>
    </reaction>
</comment>
<comment type="cofactor">
    <cofactor evidence="1">
        <name>Mg(2+)</name>
        <dbReference type="ChEBI" id="CHEBI:18420"/>
    </cofactor>
</comment>
<comment type="pathway">
    <text evidence="1">Carbohydrate degradation; L-rhamnose degradation; glycerone phosphate from L-rhamnose: step 2/3.</text>
</comment>
<comment type="similarity">
    <text evidence="1">Belongs to the rhamnulokinase family.</text>
</comment>
<name>RHAB_YERPS</name>
<organism>
    <name type="scientific">Yersinia pseudotuberculosis serotype I (strain IP32953)</name>
    <dbReference type="NCBI Taxonomy" id="273123"/>
    <lineage>
        <taxon>Bacteria</taxon>
        <taxon>Pseudomonadati</taxon>
        <taxon>Pseudomonadota</taxon>
        <taxon>Gammaproteobacteria</taxon>
        <taxon>Enterobacterales</taxon>
        <taxon>Yersiniaceae</taxon>
        <taxon>Yersinia</taxon>
    </lineage>
</organism>